<gene>
    <name evidence="1" type="primary">hisB</name>
    <name type="ordered locus">BMA10247_2763</name>
</gene>
<evidence type="ECO:0000255" key="1">
    <source>
        <dbReference type="HAMAP-Rule" id="MF_00076"/>
    </source>
</evidence>
<sequence length="195" mass="21476">MRVAQVVRNTSETQISVKIDLDGTGRQKLATGVPFLDHMLDQIARHGLVDLDIEAHGDTHIDDHHTVEDVGITLGQAVAKAVGDRKGIRRYGHSYVPLDEALSRVVIDFSGRPGLEFHVPFTRARIGTFDVDLSIEFFRGFVNHAGVTLHIDNLRGVNAHHQLETVFKAFGRALRMAVELDERAAGQIPSTKGSL</sequence>
<proteinExistence type="inferred from homology"/>
<protein>
    <recommendedName>
        <fullName evidence="1">Imidazoleglycerol-phosphate dehydratase</fullName>
        <shortName evidence="1">IGPD</shortName>
        <ecNumber evidence="1">4.2.1.19</ecNumber>
    </recommendedName>
</protein>
<accession>A3MPU8</accession>
<reference key="1">
    <citation type="journal article" date="2010" name="Genome Biol. Evol.">
        <title>Continuing evolution of Burkholderia mallei through genome reduction and large-scale rearrangements.</title>
        <authorList>
            <person name="Losada L."/>
            <person name="Ronning C.M."/>
            <person name="DeShazer D."/>
            <person name="Woods D."/>
            <person name="Fedorova N."/>
            <person name="Kim H.S."/>
            <person name="Shabalina S.A."/>
            <person name="Pearson T.R."/>
            <person name="Brinkac L."/>
            <person name="Tan P."/>
            <person name="Nandi T."/>
            <person name="Crabtree J."/>
            <person name="Badger J."/>
            <person name="Beckstrom-Sternberg S."/>
            <person name="Saqib M."/>
            <person name="Schutzer S.E."/>
            <person name="Keim P."/>
            <person name="Nierman W.C."/>
        </authorList>
    </citation>
    <scope>NUCLEOTIDE SEQUENCE [LARGE SCALE GENOMIC DNA]</scope>
    <source>
        <strain>NCTC 10247</strain>
    </source>
</reference>
<dbReference type="EC" id="4.2.1.19" evidence="1"/>
<dbReference type="EMBL" id="CP000548">
    <property type="protein sequence ID" value="ABO07212.1"/>
    <property type="molecule type" value="Genomic_DNA"/>
</dbReference>
<dbReference type="RefSeq" id="WP_004199911.1">
    <property type="nucleotide sequence ID" value="NZ_CP007802.1"/>
</dbReference>
<dbReference type="SMR" id="A3MPU8"/>
<dbReference type="GeneID" id="93061754"/>
<dbReference type="KEGG" id="bmaz:BM44_569"/>
<dbReference type="KEGG" id="bmn:BMA10247_2763"/>
<dbReference type="PATRIC" id="fig|320389.8.peg.623"/>
<dbReference type="UniPathway" id="UPA00031">
    <property type="reaction ID" value="UER00011"/>
</dbReference>
<dbReference type="GO" id="GO:0005737">
    <property type="term" value="C:cytoplasm"/>
    <property type="evidence" value="ECO:0007669"/>
    <property type="project" value="UniProtKB-SubCell"/>
</dbReference>
<dbReference type="GO" id="GO:0004424">
    <property type="term" value="F:imidazoleglycerol-phosphate dehydratase activity"/>
    <property type="evidence" value="ECO:0007669"/>
    <property type="project" value="UniProtKB-UniRule"/>
</dbReference>
<dbReference type="GO" id="GO:0000105">
    <property type="term" value="P:L-histidine biosynthetic process"/>
    <property type="evidence" value="ECO:0007669"/>
    <property type="project" value="UniProtKB-UniRule"/>
</dbReference>
<dbReference type="CDD" id="cd07914">
    <property type="entry name" value="IGPD"/>
    <property type="match status" value="1"/>
</dbReference>
<dbReference type="FunFam" id="3.30.230.40:FF:000002">
    <property type="entry name" value="Imidazoleglycerol-phosphate dehydratase"/>
    <property type="match status" value="1"/>
</dbReference>
<dbReference type="FunFam" id="3.30.230.40:FF:000003">
    <property type="entry name" value="Imidazoleglycerol-phosphate dehydratase HisB"/>
    <property type="match status" value="1"/>
</dbReference>
<dbReference type="Gene3D" id="3.30.230.40">
    <property type="entry name" value="Imidazole glycerol phosphate dehydratase, domain 1"/>
    <property type="match status" value="2"/>
</dbReference>
<dbReference type="HAMAP" id="MF_00076">
    <property type="entry name" value="HisB"/>
    <property type="match status" value="1"/>
</dbReference>
<dbReference type="InterPro" id="IPR038494">
    <property type="entry name" value="IGPD_sf"/>
</dbReference>
<dbReference type="InterPro" id="IPR000807">
    <property type="entry name" value="ImidazoleglycerolP_deHydtase"/>
</dbReference>
<dbReference type="InterPro" id="IPR020565">
    <property type="entry name" value="ImidazoleglycerP_deHydtase_CS"/>
</dbReference>
<dbReference type="InterPro" id="IPR020568">
    <property type="entry name" value="Ribosomal_Su5_D2-typ_SF"/>
</dbReference>
<dbReference type="NCBIfam" id="NF002106">
    <property type="entry name" value="PRK00951.1-1"/>
    <property type="match status" value="1"/>
</dbReference>
<dbReference type="NCBIfam" id="NF002109">
    <property type="entry name" value="PRK00951.1-5"/>
    <property type="match status" value="1"/>
</dbReference>
<dbReference type="NCBIfam" id="NF002111">
    <property type="entry name" value="PRK00951.2-1"/>
    <property type="match status" value="1"/>
</dbReference>
<dbReference type="NCBIfam" id="NF002114">
    <property type="entry name" value="PRK00951.2-4"/>
    <property type="match status" value="1"/>
</dbReference>
<dbReference type="PANTHER" id="PTHR23133:SF2">
    <property type="entry name" value="IMIDAZOLEGLYCEROL-PHOSPHATE DEHYDRATASE"/>
    <property type="match status" value="1"/>
</dbReference>
<dbReference type="PANTHER" id="PTHR23133">
    <property type="entry name" value="IMIDAZOLEGLYCEROL-PHOSPHATE DEHYDRATASE HIS7"/>
    <property type="match status" value="1"/>
</dbReference>
<dbReference type="Pfam" id="PF00475">
    <property type="entry name" value="IGPD"/>
    <property type="match status" value="1"/>
</dbReference>
<dbReference type="SUPFAM" id="SSF54211">
    <property type="entry name" value="Ribosomal protein S5 domain 2-like"/>
    <property type="match status" value="2"/>
</dbReference>
<dbReference type="PROSITE" id="PS00954">
    <property type="entry name" value="IGP_DEHYDRATASE_1"/>
    <property type="match status" value="1"/>
</dbReference>
<dbReference type="PROSITE" id="PS00955">
    <property type="entry name" value="IGP_DEHYDRATASE_2"/>
    <property type="match status" value="1"/>
</dbReference>
<comment type="catalytic activity">
    <reaction evidence="1">
        <text>D-erythro-1-(imidazol-4-yl)glycerol 3-phosphate = 3-(imidazol-4-yl)-2-oxopropyl phosphate + H2O</text>
        <dbReference type="Rhea" id="RHEA:11040"/>
        <dbReference type="ChEBI" id="CHEBI:15377"/>
        <dbReference type="ChEBI" id="CHEBI:57766"/>
        <dbReference type="ChEBI" id="CHEBI:58278"/>
        <dbReference type="EC" id="4.2.1.19"/>
    </reaction>
</comment>
<comment type="pathway">
    <text evidence="1">Amino-acid biosynthesis; L-histidine biosynthesis; L-histidine from 5-phospho-alpha-D-ribose 1-diphosphate: step 6/9.</text>
</comment>
<comment type="subcellular location">
    <subcellularLocation>
        <location evidence="1">Cytoplasm</location>
    </subcellularLocation>
</comment>
<comment type="similarity">
    <text evidence="1">Belongs to the imidazoleglycerol-phosphate dehydratase family.</text>
</comment>
<feature type="chain" id="PRO_1000010255" description="Imidazoleglycerol-phosphate dehydratase">
    <location>
        <begin position="1"/>
        <end position="195"/>
    </location>
</feature>
<keyword id="KW-0028">Amino-acid biosynthesis</keyword>
<keyword id="KW-0963">Cytoplasm</keyword>
<keyword id="KW-0368">Histidine biosynthesis</keyword>
<keyword id="KW-0456">Lyase</keyword>
<organism>
    <name type="scientific">Burkholderia mallei (strain NCTC 10247)</name>
    <dbReference type="NCBI Taxonomy" id="320389"/>
    <lineage>
        <taxon>Bacteria</taxon>
        <taxon>Pseudomonadati</taxon>
        <taxon>Pseudomonadota</taxon>
        <taxon>Betaproteobacteria</taxon>
        <taxon>Burkholderiales</taxon>
        <taxon>Burkholderiaceae</taxon>
        <taxon>Burkholderia</taxon>
        <taxon>pseudomallei group</taxon>
    </lineage>
</organism>
<name>HIS7_BURM7</name>